<gene>
    <name evidence="1" type="primary">nusB</name>
    <name type="ordered locus">TT_C0756</name>
</gene>
<keyword id="KW-0694">RNA-binding</keyword>
<keyword id="KW-0804">Transcription</keyword>
<keyword id="KW-0889">Transcription antitermination</keyword>
<keyword id="KW-0805">Transcription regulation</keyword>
<dbReference type="EMBL" id="AE017221">
    <property type="protein sequence ID" value="AAS81102.1"/>
    <property type="molecule type" value="Genomic_DNA"/>
</dbReference>
<dbReference type="RefSeq" id="WP_008632549.1">
    <property type="nucleotide sequence ID" value="NC_005835.1"/>
</dbReference>
<dbReference type="SMR" id="Q72JL6"/>
<dbReference type="GeneID" id="3168712"/>
<dbReference type="KEGG" id="tth:TT_C0756"/>
<dbReference type="eggNOG" id="COG0781">
    <property type="taxonomic scope" value="Bacteria"/>
</dbReference>
<dbReference type="HOGENOM" id="CLU_087843_3_0_0"/>
<dbReference type="OrthoDB" id="9811381at2"/>
<dbReference type="Proteomes" id="UP000000592">
    <property type="component" value="Chromosome"/>
</dbReference>
<dbReference type="GO" id="GO:0005829">
    <property type="term" value="C:cytosol"/>
    <property type="evidence" value="ECO:0007669"/>
    <property type="project" value="TreeGrafter"/>
</dbReference>
<dbReference type="GO" id="GO:0003723">
    <property type="term" value="F:RNA binding"/>
    <property type="evidence" value="ECO:0007669"/>
    <property type="project" value="UniProtKB-UniRule"/>
</dbReference>
<dbReference type="GO" id="GO:0006353">
    <property type="term" value="P:DNA-templated transcription termination"/>
    <property type="evidence" value="ECO:0007669"/>
    <property type="project" value="UniProtKB-UniRule"/>
</dbReference>
<dbReference type="GO" id="GO:0031564">
    <property type="term" value="P:transcription antitermination"/>
    <property type="evidence" value="ECO:0007669"/>
    <property type="project" value="UniProtKB-KW"/>
</dbReference>
<dbReference type="Gene3D" id="1.10.940.10">
    <property type="entry name" value="NusB-like"/>
    <property type="match status" value="1"/>
</dbReference>
<dbReference type="HAMAP" id="MF_00073">
    <property type="entry name" value="NusB"/>
    <property type="match status" value="1"/>
</dbReference>
<dbReference type="InterPro" id="IPR035926">
    <property type="entry name" value="NusB-like_sf"/>
</dbReference>
<dbReference type="InterPro" id="IPR011605">
    <property type="entry name" value="NusB_fam"/>
</dbReference>
<dbReference type="InterPro" id="IPR006027">
    <property type="entry name" value="NusB_RsmB_TIM44"/>
</dbReference>
<dbReference type="NCBIfam" id="TIGR01951">
    <property type="entry name" value="nusB"/>
    <property type="match status" value="1"/>
</dbReference>
<dbReference type="PANTHER" id="PTHR11078:SF3">
    <property type="entry name" value="ANTITERMINATION NUSB DOMAIN-CONTAINING PROTEIN"/>
    <property type="match status" value="1"/>
</dbReference>
<dbReference type="PANTHER" id="PTHR11078">
    <property type="entry name" value="N UTILIZATION SUBSTANCE PROTEIN B-RELATED"/>
    <property type="match status" value="1"/>
</dbReference>
<dbReference type="Pfam" id="PF01029">
    <property type="entry name" value="NusB"/>
    <property type="match status" value="1"/>
</dbReference>
<dbReference type="SUPFAM" id="SSF48013">
    <property type="entry name" value="NusB-like"/>
    <property type="match status" value="1"/>
</dbReference>
<accession>Q72JL6</accession>
<protein>
    <recommendedName>
        <fullName evidence="1">Transcription antitermination protein NusB</fullName>
    </recommendedName>
    <alternativeName>
        <fullName evidence="1">Antitermination factor NusB</fullName>
    </alternativeName>
</protein>
<feature type="chain" id="PRO_0000265617" description="Transcription antitermination protein NusB">
    <location>
        <begin position="1"/>
        <end position="151"/>
    </location>
</feature>
<organism>
    <name type="scientific">Thermus thermophilus (strain ATCC BAA-163 / DSM 7039 / HB27)</name>
    <dbReference type="NCBI Taxonomy" id="262724"/>
    <lineage>
        <taxon>Bacteria</taxon>
        <taxon>Thermotogati</taxon>
        <taxon>Deinococcota</taxon>
        <taxon>Deinococci</taxon>
        <taxon>Thermales</taxon>
        <taxon>Thermaceae</taxon>
        <taxon>Thermus</taxon>
    </lineage>
</organism>
<name>NUSB_THET2</name>
<sequence>MRRRARELAMRALFAHTVGGMGLEEAFQHALEEMGGEEEGYAEPLDQEGVAFARRLLSGYKAHQEEVDRVLEETVEGWDFRQMAKTDLAVLRLAVYEMLYEPTPFEPLIEVAVKIANRYGGEHSGSFVNGVLARVYRRVAAGELKTVAKEA</sequence>
<comment type="function">
    <text evidence="1">Involved in transcription antitermination. Required for transcription of ribosomal RNA (rRNA) genes. Binds specifically to the boxA antiterminator sequence of the ribosomal RNA (rrn) operons.</text>
</comment>
<comment type="similarity">
    <text evidence="1">Belongs to the NusB family.</text>
</comment>
<proteinExistence type="inferred from homology"/>
<evidence type="ECO:0000255" key="1">
    <source>
        <dbReference type="HAMAP-Rule" id="MF_00073"/>
    </source>
</evidence>
<reference key="1">
    <citation type="journal article" date="2004" name="Nat. Biotechnol.">
        <title>The genome sequence of the extreme thermophile Thermus thermophilus.</title>
        <authorList>
            <person name="Henne A."/>
            <person name="Brueggemann H."/>
            <person name="Raasch C."/>
            <person name="Wiezer A."/>
            <person name="Hartsch T."/>
            <person name="Liesegang H."/>
            <person name="Johann A."/>
            <person name="Lienard T."/>
            <person name="Gohl O."/>
            <person name="Martinez-Arias R."/>
            <person name="Jacobi C."/>
            <person name="Starkuviene V."/>
            <person name="Schlenczeck S."/>
            <person name="Dencker S."/>
            <person name="Huber R."/>
            <person name="Klenk H.-P."/>
            <person name="Kramer W."/>
            <person name="Merkl R."/>
            <person name="Gottschalk G."/>
            <person name="Fritz H.-J."/>
        </authorList>
    </citation>
    <scope>NUCLEOTIDE SEQUENCE [LARGE SCALE GENOMIC DNA]</scope>
    <source>
        <strain>ATCC BAA-163 / DSM 7039 / HB27</strain>
    </source>
</reference>